<keyword id="KW-0007">Acetylation</keyword>
<keyword id="KW-0903">Direct protein sequencing</keyword>
<keyword id="KW-0349">Heme</keyword>
<keyword id="KW-0408">Iron</keyword>
<keyword id="KW-0479">Metal-binding</keyword>
<keyword id="KW-0561">Oxygen transport</keyword>
<keyword id="KW-0597">Phosphoprotein</keyword>
<keyword id="KW-0813">Transport</keyword>
<protein>
    <recommendedName>
        <fullName>Hemoglobin subunit alpha</fullName>
    </recommendedName>
    <alternativeName>
        <fullName>Alpha-globin</fullName>
    </alternativeName>
    <alternativeName>
        <fullName>Hemoglobin alpha chain</fullName>
    </alternativeName>
    <component>
        <recommendedName>
            <fullName evidence="2">Hemopressin</fullName>
        </recommendedName>
    </component>
</protein>
<comment type="function">
    <text>Involved in oxygen transport from the lung to the various peripheral tissues.</text>
</comment>
<comment type="function">
    <molecule>Hemopressin</molecule>
    <text evidence="2">Hemopressin acts as an antagonist peptide of the cannabinoid receptor CNR1. Hemopressin-binding efficiently blocks cannabinoid receptor CNR1 and subsequent signaling.</text>
</comment>
<comment type="subunit">
    <text>Heterotetramer of two alpha chains and two beta chains.</text>
</comment>
<comment type="tissue specificity">
    <text>Red blood cells.</text>
</comment>
<comment type="similarity">
    <text evidence="4">Belongs to the globin family.</text>
</comment>
<accession>P14390</accession>
<evidence type="ECO:0000250" key="1">
    <source>
        <dbReference type="UniProtKB" id="P01942"/>
    </source>
</evidence>
<evidence type="ECO:0000250" key="2">
    <source>
        <dbReference type="UniProtKB" id="P01946"/>
    </source>
</evidence>
<evidence type="ECO:0000250" key="3">
    <source>
        <dbReference type="UniProtKB" id="P69905"/>
    </source>
</evidence>
<evidence type="ECO:0000255" key="4">
    <source>
        <dbReference type="PROSITE-ProRule" id="PRU00238"/>
    </source>
</evidence>
<gene>
    <name type="primary">HBA</name>
</gene>
<dbReference type="PIR" id="S01310">
    <property type="entry name" value="HAFXG"/>
</dbReference>
<dbReference type="SMR" id="P14390"/>
<dbReference type="GO" id="GO:0072562">
    <property type="term" value="C:blood microparticle"/>
    <property type="evidence" value="ECO:0007669"/>
    <property type="project" value="TreeGrafter"/>
</dbReference>
<dbReference type="GO" id="GO:0031838">
    <property type="term" value="C:haptoglobin-hemoglobin complex"/>
    <property type="evidence" value="ECO:0007669"/>
    <property type="project" value="TreeGrafter"/>
</dbReference>
<dbReference type="GO" id="GO:0005833">
    <property type="term" value="C:hemoglobin complex"/>
    <property type="evidence" value="ECO:0007669"/>
    <property type="project" value="InterPro"/>
</dbReference>
<dbReference type="GO" id="GO:0031720">
    <property type="term" value="F:haptoglobin binding"/>
    <property type="evidence" value="ECO:0007669"/>
    <property type="project" value="TreeGrafter"/>
</dbReference>
<dbReference type="GO" id="GO:0020037">
    <property type="term" value="F:heme binding"/>
    <property type="evidence" value="ECO:0007669"/>
    <property type="project" value="InterPro"/>
</dbReference>
<dbReference type="GO" id="GO:0005506">
    <property type="term" value="F:iron ion binding"/>
    <property type="evidence" value="ECO:0007669"/>
    <property type="project" value="InterPro"/>
</dbReference>
<dbReference type="GO" id="GO:0043177">
    <property type="term" value="F:organic acid binding"/>
    <property type="evidence" value="ECO:0007669"/>
    <property type="project" value="TreeGrafter"/>
</dbReference>
<dbReference type="GO" id="GO:0019825">
    <property type="term" value="F:oxygen binding"/>
    <property type="evidence" value="ECO:0007669"/>
    <property type="project" value="InterPro"/>
</dbReference>
<dbReference type="GO" id="GO:0005344">
    <property type="term" value="F:oxygen carrier activity"/>
    <property type="evidence" value="ECO:0007669"/>
    <property type="project" value="UniProtKB-KW"/>
</dbReference>
<dbReference type="GO" id="GO:0004601">
    <property type="term" value="F:peroxidase activity"/>
    <property type="evidence" value="ECO:0007669"/>
    <property type="project" value="TreeGrafter"/>
</dbReference>
<dbReference type="GO" id="GO:0042744">
    <property type="term" value="P:hydrogen peroxide catabolic process"/>
    <property type="evidence" value="ECO:0007669"/>
    <property type="project" value="TreeGrafter"/>
</dbReference>
<dbReference type="CDD" id="cd08927">
    <property type="entry name" value="Hb-alpha-like"/>
    <property type="match status" value="1"/>
</dbReference>
<dbReference type="FunFam" id="1.10.490.10:FF:000002">
    <property type="entry name" value="Hemoglobin subunit alpha"/>
    <property type="match status" value="1"/>
</dbReference>
<dbReference type="Gene3D" id="1.10.490.10">
    <property type="entry name" value="Globins"/>
    <property type="match status" value="1"/>
</dbReference>
<dbReference type="InterPro" id="IPR000971">
    <property type="entry name" value="Globin"/>
</dbReference>
<dbReference type="InterPro" id="IPR009050">
    <property type="entry name" value="Globin-like_sf"/>
</dbReference>
<dbReference type="InterPro" id="IPR012292">
    <property type="entry name" value="Globin/Proto"/>
</dbReference>
<dbReference type="InterPro" id="IPR002338">
    <property type="entry name" value="Hemoglobin_a-typ"/>
</dbReference>
<dbReference type="InterPro" id="IPR050056">
    <property type="entry name" value="Hemoglobin_oxygen_transport"/>
</dbReference>
<dbReference type="InterPro" id="IPR002339">
    <property type="entry name" value="Hemoglobin_pi"/>
</dbReference>
<dbReference type="PANTHER" id="PTHR11442">
    <property type="entry name" value="HEMOGLOBIN FAMILY MEMBER"/>
    <property type="match status" value="1"/>
</dbReference>
<dbReference type="PANTHER" id="PTHR11442:SF48">
    <property type="entry name" value="HEMOGLOBIN SUBUNIT ALPHA"/>
    <property type="match status" value="1"/>
</dbReference>
<dbReference type="Pfam" id="PF00042">
    <property type="entry name" value="Globin"/>
    <property type="match status" value="1"/>
</dbReference>
<dbReference type="PRINTS" id="PR00612">
    <property type="entry name" value="ALPHAHAEM"/>
</dbReference>
<dbReference type="PRINTS" id="PR00815">
    <property type="entry name" value="PIHAEM"/>
</dbReference>
<dbReference type="SUPFAM" id="SSF46458">
    <property type="entry name" value="Globin-like"/>
    <property type="match status" value="1"/>
</dbReference>
<dbReference type="PROSITE" id="PS01033">
    <property type="entry name" value="GLOBIN"/>
    <property type="match status" value="1"/>
</dbReference>
<organism>
    <name type="scientific">Pteropus poliocephalus</name>
    <name type="common">Grey-headed flying fox</name>
    <dbReference type="NCBI Taxonomy" id="9403"/>
    <lineage>
        <taxon>Eukaryota</taxon>
        <taxon>Metazoa</taxon>
        <taxon>Chordata</taxon>
        <taxon>Craniata</taxon>
        <taxon>Vertebrata</taxon>
        <taxon>Euteleostomi</taxon>
        <taxon>Mammalia</taxon>
        <taxon>Eutheria</taxon>
        <taxon>Laurasiatheria</taxon>
        <taxon>Chiroptera</taxon>
        <taxon>Yinpterochiroptera</taxon>
        <taxon>Pteropodoidea</taxon>
        <taxon>Pteropodidae</taxon>
        <taxon>Pteropodinae</taxon>
        <taxon>Pteropus</taxon>
    </lineage>
</organism>
<feature type="chain" id="PRO_0000052745" description="Hemoglobin subunit alpha">
    <location>
        <begin position="1"/>
        <end position="141"/>
    </location>
</feature>
<feature type="peptide" id="PRO_0000455936" description="Hemopressin" evidence="2">
    <location>
        <begin position="95"/>
        <end position="103"/>
    </location>
</feature>
<feature type="domain" description="Globin" evidence="4">
    <location>
        <begin position="1"/>
        <end position="141"/>
    </location>
</feature>
<feature type="binding site" evidence="4">
    <location>
        <position position="58"/>
    </location>
    <ligand>
        <name>O2</name>
        <dbReference type="ChEBI" id="CHEBI:15379"/>
    </ligand>
</feature>
<feature type="binding site" description="proximal binding residue" evidence="4">
    <location>
        <position position="87"/>
    </location>
    <ligand>
        <name>heme b</name>
        <dbReference type="ChEBI" id="CHEBI:60344"/>
    </ligand>
    <ligandPart>
        <name>Fe</name>
        <dbReference type="ChEBI" id="CHEBI:18248"/>
    </ligandPart>
</feature>
<feature type="modified residue" description="Phosphoserine" evidence="3">
    <location>
        <position position="3"/>
    </location>
</feature>
<feature type="modified residue" description="N6-succinyllysine" evidence="1">
    <location>
        <position position="7"/>
    </location>
</feature>
<feature type="modified residue" description="N6-succinyllysine" evidence="1">
    <location>
        <position position="11"/>
    </location>
</feature>
<feature type="modified residue" description="N6-acetyllysine; alternate" evidence="3">
    <location>
        <position position="16"/>
    </location>
</feature>
<feature type="modified residue" description="N6-succinyllysine; alternate" evidence="1">
    <location>
        <position position="16"/>
    </location>
</feature>
<feature type="modified residue" description="Phosphotyrosine" evidence="3">
    <location>
        <position position="24"/>
    </location>
</feature>
<feature type="modified residue" description="Phosphoserine" evidence="3">
    <location>
        <position position="35"/>
    </location>
</feature>
<feature type="modified residue" description="N6-succinyllysine" evidence="1">
    <location>
        <position position="40"/>
    </location>
</feature>
<feature type="modified residue" description="Phosphoserine" evidence="1">
    <location>
        <position position="102"/>
    </location>
</feature>
<feature type="modified residue" description="Phosphothreonine" evidence="1">
    <location>
        <position position="108"/>
    </location>
</feature>
<feature type="modified residue" description="Phosphoserine" evidence="1">
    <location>
        <position position="124"/>
    </location>
</feature>
<feature type="modified residue" description="Phosphoserine" evidence="1">
    <location>
        <position position="131"/>
    </location>
</feature>
<feature type="modified residue" description="Phosphothreonine" evidence="1">
    <location>
        <position position="134"/>
    </location>
</feature>
<feature type="modified residue" description="Phosphothreonine" evidence="1">
    <location>
        <position position="137"/>
    </location>
</feature>
<feature type="modified residue" description="Phosphoserine" evidence="1">
    <location>
        <position position="138"/>
    </location>
</feature>
<name>HBA_PTEPO</name>
<reference key="1">
    <citation type="journal article" date="1988" name="Biol. Chem. Hoppe-Seyler">
        <title>The primary structure of the hemoglobin from the grey-headed flying fox (Pteropus poliocephalus) and the black flying fox (P. alecto, Megachiroptera).</title>
        <authorList>
            <person name="Kleinschmidt T."/>
            <person name="Sgouros J.G."/>
            <person name="Pettigrew J.D."/>
            <person name="Braunitzer G."/>
        </authorList>
    </citation>
    <scope>PROTEIN SEQUENCE</scope>
</reference>
<sequence>VLSSTDKSNVKAAWDKVGGNVGEYGAEALERMFLSFPTTKTYFPHFDLAHGSSQVKAHGKKVGDALTNAVGHMDDLPGALSALSDLHAYKLRVDPVNFKLLSHCLLVTLANHLPNDFTPAVHASLDKFLASVSTVLTSKYR</sequence>
<proteinExistence type="evidence at protein level"/>